<proteinExistence type="inferred from homology"/>
<organism>
    <name type="scientific">Oltmannsiellopsis viridis</name>
    <name type="common">Marine flagellate</name>
    <name type="synonym">Oltmannsiella viridis</name>
    <dbReference type="NCBI Taxonomy" id="51324"/>
    <lineage>
        <taxon>Eukaryota</taxon>
        <taxon>Viridiplantae</taxon>
        <taxon>Chlorophyta</taxon>
        <taxon>Ulvophyceae</taxon>
        <taxon>Oltmannsiellopsidales</taxon>
        <taxon>Oltmannsiellopsidaceae</taxon>
        <taxon>Oltmannsiellopsis</taxon>
    </lineage>
</organism>
<gene>
    <name type="primary">rpoA</name>
</gene>
<keyword id="KW-0150">Chloroplast</keyword>
<keyword id="KW-0240">DNA-directed RNA polymerase</keyword>
<keyword id="KW-0548">Nucleotidyltransferase</keyword>
<keyword id="KW-0934">Plastid</keyword>
<keyword id="KW-0804">Transcription</keyword>
<keyword id="KW-0808">Transferase</keyword>
<geneLocation type="chloroplast"/>
<dbReference type="EC" id="2.7.7.6"/>
<dbReference type="EMBL" id="DQ291132">
    <property type="protein sequence ID" value="ABB82004.1"/>
    <property type="molecule type" value="Genomic_DNA"/>
</dbReference>
<dbReference type="RefSeq" id="YP_635843.1">
    <property type="nucleotide sequence ID" value="NC_008099.1"/>
</dbReference>
<dbReference type="SMR" id="Q20F02"/>
<dbReference type="GeneID" id="4100180"/>
<dbReference type="GO" id="GO:0009507">
    <property type="term" value="C:chloroplast"/>
    <property type="evidence" value="ECO:0007669"/>
    <property type="project" value="UniProtKB-SubCell"/>
</dbReference>
<dbReference type="GO" id="GO:0000428">
    <property type="term" value="C:DNA-directed RNA polymerase complex"/>
    <property type="evidence" value="ECO:0007669"/>
    <property type="project" value="UniProtKB-KW"/>
</dbReference>
<dbReference type="GO" id="GO:0005739">
    <property type="term" value="C:mitochondrion"/>
    <property type="evidence" value="ECO:0007669"/>
    <property type="project" value="GOC"/>
</dbReference>
<dbReference type="GO" id="GO:0003677">
    <property type="term" value="F:DNA binding"/>
    <property type="evidence" value="ECO:0007669"/>
    <property type="project" value="InterPro"/>
</dbReference>
<dbReference type="GO" id="GO:0003899">
    <property type="term" value="F:DNA-directed RNA polymerase activity"/>
    <property type="evidence" value="ECO:0007669"/>
    <property type="project" value="UniProtKB-EC"/>
</dbReference>
<dbReference type="GO" id="GO:0046983">
    <property type="term" value="F:protein dimerization activity"/>
    <property type="evidence" value="ECO:0007669"/>
    <property type="project" value="InterPro"/>
</dbReference>
<dbReference type="GO" id="GO:0006351">
    <property type="term" value="P:DNA-templated transcription"/>
    <property type="evidence" value="ECO:0007669"/>
    <property type="project" value="InterPro"/>
</dbReference>
<dbReference type="CDD" id="cd06928">
    <property type="entry name" value="RNAP_alpha_NTD"/>
    <property type="match status" value="1"/>
</dbReference>
<dbReference type="Gene3D" id="1.10.150.20">
    <property type="entry name" value="5' to 3' exonuclease, C-terminal subdomain"/>
    <property type="match status" value="1"/>
</dbReference>
<dbReference type="Gene3D" id="2.170.120.12">
    <property type="entry name" value="DNA-directed RNA polymerase, insert domain"/>
    <property type="match status" value="1"/>
</dbReference>
<dbReference type="Gene3D" id="3.30.1360.10">
    <property type="entry name" value="RNA polymerase, RBP11-like subunit"/>
    <property type="match status" value="1"/>
</dbReference>
<dbReference type="InterPro" id="IPR011262">
    <property type="entry name" value="DNA-dir_RNA_pol_insert"/>
</dbReference>
<dbReference type="InterPro" id="IPR011263">
    <property type="entry name" value="DNA-dir_RNA_pol_RpoA/D/Rpb3"/>
</dbReference>
<dbReference type="InterPro" id="IPR036603">
    <property type="entry name" value="RBP11-like"/>
</dbReference>
<dbReference type="InterPro" id="IPR011260">
    <property type="entry name" value="RNAP_asu_C"/>
</dbReference>
<dbReference type="InterPro" id="IPR036643">
    <property type="entry name" value="RNApol_insert_sf"/>
</dbReference>
<dbReference type="Pfam" id="PF01000">
    <property type="entry name" value="RNA_pol_A_bac"/>
    <property type="match status" value="1"/>
</dbReference>
<dbReference type="Pfam" id="PF03118">
    <property type="entry name" value="RNA_pol_A_CTD"/>
    <property type="match status" value="1"/>
</dbReference>
<dbReference type="Pfam" id="PF01193">
    <property type="entry name" value="RNA_pol_L"/>
    <property type="match status" value="1"/>
</dbReference>
<dbReference type="SMART" id="SM00662">
    <property type="entry name" value="RPOLD"/>
    <property type="match status" value="1"/>
</dbReference>
<dbReference type="SUPFAM" id="SSF47789">
    <property type="entry name" value="C-terminal domain of RNA polymerase alpha subunit"/>
    <property type="match status" value="1"/>
</dbReference>
<dbReference type="SUPFAM" id="SSF56553">
    <property type="entry name" value="Insert subdomain of RNA polymerase alpha subunit"/>
    <property type="match status" value="1"/>
</dbReference>
<dbReference type="SUPFAM" id="SSF55257">
    <property type="entry name" value="RBP11-like subunits of RNA polymerase"/>
    <property type="match status" value="1"/>
</dbReference>
<comment type="function">
    <text evidence="1">DNA-dependent RNA polymerase catalyzes the transcription of DNA into RNA using the four ribonucleoside triphosphates as substrates.</text>
</comment>
<comment type="catalytic activity">
    <reaction>
        <text>RNA(n) + a ribonucleoside 5'-triphosphate = RNA(n+1) + diphosphate</text>
        <dbReference type="Rhea" id="RHEA:21248"/>
        <dbReference type="Rhea" id="RHEA-COMP:14527"/>
        <dbReference type="Rhea" id="RHEA-COMP:17342"/>
        <dbReference type="ChEBI" id="CHEBI:33019"/>
        <dbReference type="ChEBI" id="CHEBI:61557"/>
        <dbReference type="ChEBI" id="CHEBI:140395"/>
        <dbReference type="EC" id="2.7.7.6"/>
    </reaction>
</comment>
<comment type="subunit">
    <text evidence="1">In plastids the minimal PEP RNA polymerase catalytic core is composed of four subunits: alpha, beta, beta', and beta''. When a (nuclear-encoded) sigma factor is associated with the core the holoenzyme is formed, which can initiate transcription (By similarity).</text>
</comment>
<comment type="subcellular location">
    <subcellularLocation>
        <location>Plastid</location>
        <location>Chloroplast</location>
    </subcellularLocation>
</comment>
<comment type="domain">
    <text evidence="1">The N-terminal domain is essential for RNAP assembly and basal transcription, whereas the C-terminal domain is involved in interaction with transcriptional regulators and with upstream promoter elements.</text>
</comment>
<comment type="similarity">
    <text evidence="2">Belongs to the RNA polymerase alpha chain family.</text>
</comment>
<name>RPOA_OLTVI</name>
<accession>Q20F02</accession>
<sequence length="508" mass="56731">MKHILLSCVESRIEHNRSFYSRFQLGPFDLGQGLTVGNAFRRTLLSELSGVGITLIEIDGVCHEYSTLPGVRESVLDILLNLKQLVLTSDTTFTVPQVGYLNFTGPGVVTAKDLKLPVSVYCVDPDQPIATLSADATLNFKFLVCQGKNYIIQTPVDKFHEYQKKILNSKLNLPLSSRTTLNSTFERPNQDSLVGTPLQEGVGKTKQNKRLNAHFQRQLKQLNRLKETSFKAYKTKVGEKTISDEFQTNSVNHQNLTTFDLREKKLTDVTTSLQHGEEATLLKEEGLNKLDNSSPQLENKLKGGRDFSGGSQLASQALPVDTLFMPIKKVNYMIDIDPAEPDRESVVLEIWTNGSIHPRQAVHEAAKQLIHLFSPFLQTHLVPTTLQSTPYSKAASKTQEFSLNETSTEKVKDELGKVAFGSENNTAALNQQKNLVTAIQTLDIANLNFSLRTFTFLKKENINTVSELVEFWTRQKTEAKDSIQSNVQSSVLLEISNNLKNFGVLPTS</sequence>
<reference key="1">
    <citation type="journal article" date="2006" name="BMC Biol.">
        <title>The complete chloroplast DNA sequence of the green alga Oltmannsiellopsis viridis reveals a distinctive quadripartite architecture in the chloroplast genome of early diverging ulvophytes.</title>
        <authorList>
            <person name="Pombert J.-F."/>
            <person name="Lemieux C."/>
            <person name="Turmel M."/>
        </authorList>
    </citation>
    <scope>NUCLEOTIDE SEQUENCE [LARGE SCALE GENOMIC DNA]</scope>
</reference>
<evidence type="ECO:0000250" key="1"/>
<evidence type="ECO:0000305" key="2"/>
<protein>
    <recommendedName>
        <fullName>DNA-directed RNA polymerase subunit alpha</fullName>
        <shortName>PEP</shortName>
        <ecNumber>2.7.7.6</ecNumber>
    </recommendedName>
    <alternativeName>
        <fullName>Plastid-encoded RNA polymerase subunit alpha</fullName>
        <shortName>RNA polymerase subunit alpha</shortName>
    </alternativeName>
</protein>
<feature type="chain" id="PRO_0000296900" description="DNA-directed RNA polymerase subunit alpha">
    <location>
        <begin position="1"/>
        <end position="508"/>
    </location>
</feature>
<feature type="region of interest" description="Alpha N-terminal domain (alpha-NTD)" evidence="1">
    <location>
        <begin position="1"/>
        <end position="380"/>
    </location>
</feature>
<feature type="region of interest" description="Alpha C-terminal domain (alpha-CTD)" evidence="1">
    <location>
        <begin position="434"/>
        <end position="508"/>
    </location>
</feature>